<comment type="function">
    <text>Binds to sodium channels (Nav) and inhibits the inactivation of the activated channels, thereby blocking neuronal transmission.</text>
</comment>
<comment type="subcellular location">
    <subcellularLocation>
        <location>Secreted</location>
    </subcellularLocation>
</comment>
<comment type="tissue specificity">
    <text>Expressed by the venom gland.</text>
</comment>
<comment type="domain">
    <text evidence="2">Has the structural arrangement of an alpha-helix connected to antiparallel beta-sheets by disulfide bonds (CS-alpha/beta).</text>
</comment>
<comment type="similarity">
    <text evidence="2">Belongs to the long (4 C-C) scorpion toxin superfamily. Sodium channel inhibitor family. Alpha subfamily.</text>
</comment>
<sequence length="67" mass="7104">GVRDGYIAQPHNCVYHCFPGSGGCDTLCKENGATQGSSCFILGRGTACWCKDLPDRVGVIVDGEKCH</sequence>
<reference key="1">
    <citation type="journal article" date="1984" name="Bioorg. Khim.">
        <title>Toxic components of the venom of the Central Asian scorpion, Orthochirus scrobiculosus.</title>
        <authorList>
            <person name="Volkova T.M."/>
            <person name="Dulubova I.E."/>
            <person name="Telezhinskaya I.N."/>
            <person name="Grishin E.V."/>
        </authorList>
    </citation>
    <scope>PROTEIN SEQUENCE</scope>
    <source>
        <tissue>Venom</tissue>
    </source>
</reference>
<accession>P15225</accession>
<name>SCX3_ORTSC</name>
<feature type="chain" id="PRO_0000066790" description="Neurotoxin Os3">
    <location>
        <begin position="1"/>
        <end position="67"/>
    </location>
</feature>
<feature type="domain" description="LCN-type CS-alpha/beta" evidence="1">
    <location>
        <begin position="3"/>
        <end position="67"/>
    </location>
</feature>
<feature type="disulfide bond" evidence="1">
    <location>
        <begin position="13"/>
        <end position="66"/>
    </location>
</feature>
<feature type="disulfide bond" evidence="1">
    <location>
        <begin position="17"/>
        <end position="39"/>
    </location>
</feature>
<feature type="disulfide bond" evidence="1">
    <location>
        <begin position="24"/>
        <end position="48"/>
    </location>
</feature>
<feature type="disulfide bond" evidence="1">
    <location>
        <begin position="28"/>
        <end position="50"/>
    </location>
</feature>
<keyword id="KW-0903">Direct protein sequencing</keyword>
<keyword id="KW-1015">Disulfide bond</keyword>
<keyword id="KW-0872">Ion channel impairing toxin</keyword>
<keyword id="KW-0528">Neurotoxin</keyword>
<keyword id="KW-0964">Secreted</keyword>
<keyword id="KW-0800">Toxin</keyword>
<keyword id="KW-0738">Voltage-gated sodium channel impairing toxin</keyword>
<dbReference type="PIR" id="JN0378">
    <property type="entry name" value="JN0378"/>
</dbReference>
<dbReference type="SMR" id="P15225"/>
<dbReference type="GO" id="GO:0005576">
    <property type="term" value="C:extracellular region"/>
    <property type="evidence" value="ECO:0007669"/>
    <property type="project" value="UniProtKB-SubCell"/>
</dbReference>
<dbReference type="GO" id="GO:0019871">
    <property type="term" value="F:sodium channel inhibitor activity"/>
    <property type="evidence" value="ECO:0007669"/>
    <property type="project" value="InterPro"/>
</dbReference>
<dbReference type="GO" id="GO:0090729">
    <property type="term" value="F:toxin activity"/>
    <property type="evidence" value="ECO:0007669"/>
    <property type="project" value="UniProtKB-KW"/>
</dbReference>
<dbReference type="GO" id="GO:0006952">
    <property type="term" value="P:defense response"/>
    <property type="evidence" value="ECO:0007669"/>
    <property type="project" value="InterPro"/>
</dbReference>
<dbReference type="CDD" id="cd23106">
    <property type="entry name" value="neurotoxins_LC_scorpion"/>
    <property type="match status" value="1"/>
</dbReference>
<dbReference type="Gene3D" id="3.30.30.10">
    <property type="entry name" value="Knottin, scorpion toxin-like"/>
    <property type="match status" value="1"/>
</dbReference>
<dbReference type="InterPro" id="IPR044062">
    <property type="entry name" value="LCN-type_CS_alpha_beta_dom"/>
</dbReference>
<dbReference type="InterPro" id="IPR003614">
    <property type="entry name" value="Scorpion_toxin-like"/>
</dbReference>
<dbReference type="InterPro" id="IPR036574">
    <property type="entry name" value="Scorpion_toxin-like_sf"/>
</dbReference>
<dbReference type="InterPro" id="IPR002061">
    <property type="entry name" value="Scorpion_toxinL/defensin"/>
</dbReference>
<dbReference type="Pfam" id="PF00537">
    <property type="entry name" value="Toxin_3"/>
    <property type="match status" value="1"/>
</dbReference>
<dbReference type="SMART" id="SM00505">
    <property type="entry name" value="Knot1"/>
    <property type="match status" value="1"/>
</dbReference>
<dbReference type="SUPFAM" id="SSF57095">
    <property type="entry name" value="Scorpion toxin-like"/>
    <property type="match status" value="1"/>
</dbReference>
<dbReference type="PROSITE" id="PS51863">
    <property type="entry name" value="LCN_CSAB"/>
    <property type="match status" value="1"/>
</dbReference>
<evidence type="ECO:0000255" key="1">
    <source>
        <dbReference type="PROSITE-ProRule" id="PRU01210"/>
    </source>
</evidence>
<evidence type="ECO:0000305" key="2"/>
<proteinExistence type="evidence at protein level"/>
<protein>
    <recommendedName>
        <fullName>Neurotoxin Os3</fullName>
        <shortName>Os-3</shortName>
    </recommendedName>
</protein>
<organism>
    <name type="scientific">Orthochirus scrobiculosus</name>
    <name type="common">Central Asian scorpion</name>
    <dbReference type="NCBI Taxonomy" id="6892"/>
    <lineage>
        <taxon>Eukaryota</taxon>
        <taxon>Metazoa</taxon>
        <taxon>Ecdysozoa</taxon>
        <taxon>Arthropoda</taxon>
        <taxon>Chelicerata</taxon>
        <taxon>Arachnida</taxon>
        <taxon>Scorpiones</taxon>
        <taxon>Buthida</taxon>
        <taxon>Buthoidea</taxon>
        <taxon>Buthidae</taxon>
        <taxon>Orthochirus</taxon>
    </lineage>
</organism>